<organism>
    <name type="scientific">Xenopus laevis</name>
    <name type="common">African clawed frog</name>
    <dbReference type="NCBI Taxonomy" id="8355"/>
    <lineage>
        <taxon>Eukaryota</taxon>
        <taxon>Metazoa</taxon>
        <taxon>Chordata</taxon>
        <taxon>Craniata</taxon>
        <taxon>Vertebrata</taxon>
        <taxon>Euteleostomi</taxon>
        <taxon>Amphibia</taxon>
        <taxon>Batrachia</taxon>
        <taxon>Anura</taxon>
        <taxon>Pipoidea</taxon>
        <taxon>Pipidae</taxon>
        <taxon>Xenopodinae</taxon>
        <taxon>Xenopus</taxon>
        <taxon>Xenopus</taxon>
    </lineage>
</organism>
<gene>
    <name type="primary">ran</name>
</gene>
<dbReference type="EC" id="3.6.5.-" evidence="2"/>
<dbReference type="EMBL" id="AB030945">
    <property type="protein sequence ID" value="BAA89696.1"/>
    <property type="molecule type" value="mRNA"/>
</dbReference>
<dbReference type="EMBL" id="BC041293">
    <property type="protein sequence ID" value="AAH41293.1"/>
    <property type="molecule type" value="mRNA"/>
</dbReference>
<dbReference type="RefSeq" id="NP_001080182.1">
    <property type="nucleotide sequence ID" value="NM_001086713.1"/>
</dbReference>
<dbReference type="RefSeq" id="NP_001128547.1">
    <property type="nucleotide sequence ID" value="NM_001135075.1"/>
</dbReference>
<dbReference type="RefSeq" id="XP_018089010.1">
    <property type="nucleotide sequence ID" value="XM_018233521.1"/>
</dbReference>
<dbReference type="RefSeq" id="XP_018089018.1">
    <property type="nucleotide sequence ID" value="XM_018233529.1"/>
</dbReference>
<dbReference type="RefSeq" id="XP_018117934.1">
    <property type="nucleotide sequence ID" value="XM_018262445.1"/>
</dbReference>
<dbReference type="RefSeq" id="XP_018117939.1">
    <property type="nucleotide sequence ID" value="XM_018262450.1"/>
</dbReference>
<dbReference type="BMRB" id="P52301"/>
<dbReference type="SMR" id="P52301"/>
<dbReference type="BioGRID" id="98116">
    <property type="interactions" value="3"/>
</dbReference>
<dbReference type="IntAct" id="P52301">
    <property type="interactions" value="1"/>
</dbReference>
<dbReference type="DNASU" id="379874"/>
<dbReference type="GeneID" id="108716335"/>
<dbReference type="GeneID" id="379874"/>
<dbReference type="KEGG" id="xla:108716335"/>
<dbReference type="KEGG" id="xla:379874"/>
<dbReference type="AGR" id="Xenbase:XB-GENE-17336523"/>
<dbReference type="CTD" id="108716335"/>
<dbReference type="CTD" id="379874"/>
<dbReference type="Xenbase" id="XB-GENE-17336523">
    <property type="gene designation" value="ran.L"/>
</dbReference>
<dbReference type="OMA" id="FNAWDTA"/>
<dbReference type="OrthoDB" id="48625at2759"/>
<dbReference type="Proteomes" id="UP000186698">
    <property type="component" value="Chromosome 1L"/>
</dbReference>
<dbReference type="Proteomes" id="UP000186698">
    <property type="component" value="Chromosome 1S"/>
</dbReference>
<dbReference type="Bgee" id="108716335">
    <property type="expression patterns" value="Expressed in gastrula and 19 other cell types or tissues"/>
</dbReference>
<dbReference type="GO" id="GO:0005737">
    <property type="term" value="C:cytoplasm"/>
    <property type="evidence" value="ECO:0000318"/>
    <property type="project" value="GO_Central"/>
</dbReference>
<dbReference type="GO" id="GO:0005829">
    <property type="term" value="C:cytosol"/>
    <property type="evidence" value="ECO:0007669"/>
    <property type="project" value="UniProtKB-SubCell"/>
</dbReference>
<dbReference type="GO" id="GO:0005635">
    <property type="term" value="C:nuclear envelope"/>
    <property type="evidence" value="ECO:0007669"/>
    <property type="project" value="UniProtKB-SubCell"/>
</dbReference>
<dbReference type="GO" id="GO:0005634">
    <property type="term" value="C:nucleus"/>
    <property type="evidence" value="ECO:0000250"/>
    <property type="project" value="UniProtKB"/>
</dbReference>
<dbReference type="GO" id="GO:0005525">
    <property type="term" value="F:GTP binding"/>
    <property type="evidence" value="ECO:0000250"/>
    <property type="project" value="UniProtKB"/>
</dbReference>
<dbReference type="GO" id="GO:0003924">
    <property type="term" value="F:GTPase activity"/>
    <property type="evidence" value="ECO:0000250"/>
    <property type="project" value="UniProtKB"/>
</dbReference>
<dbReference type="GO" id="GO:0000287">
    <property type="term" value="F:magnesium ion binding"/>
    <property type="evidence" value="ECO:0000250"/>
    <property type="project" value="UniProtKB"/>
</dbReference>
<dbReference type="GO" id="GO:0001654">
    <property type="term" value="P:eye development"/>
    <property type="evidence" value="ECO:0000315"/>
    <property type="project" value="UniProtKB"/>
</dbReference>
<dbReference type="GO" id="GO:0046039">
    <property type="term" value="P:GTP metabolic process"/>
    <property type="evidence" value="ECO:0000250"/>
    <property type="project" value="UniProtKB"/>
</dbReference>
<dbReference type="GO" id="GO:0000070">
    <property type="term" value="P:mitotic sister chromatid segregation"/>
    <property type="evidence" value="ECO:0000250"/>
    <property type="project" value="UniProtKB"/>
</dbReference>
<dbReference type="GO" id="GO:0006606">
    <property type="term" value="P:protein import into nucleus"/>
    <property type="evidence" value="ECO:0000250"/>
    <property type="project" value="UniProtKB"/>
</dbReference>
<dbReference type="GO" id="GO:0000055">
    <property type="term" value="P:ribosomal large subunit export from nucleus"/>
    <property type="evidence" value="ECO:0000316"/>
    <property type="project" value="ParkinsonsUK-UCL"/>
</dbReference>
<dbReference type="GO" id="GO:0000056">
    <property type="term" value="P:ribosomal small subunit export from nucleus"/>
    <property type="evidence" value="ECO:0000316"/>
    <property type="project" value="ParkinsonsUK-UCL"/>
</dbReference>
<dbReference type="GO" id="GO:0000054">
    <property type="term" value="P:ribosomal subunit export from nucleus"/>
    <property type="evidence" value="ECO:0000318"/>
    <property type="project" value="GO_Central"/>
</dbReference>
<dbReference type="GO" id="GO:0061015">
    <property type="term" value="P:snRNA import into nucleus"/>
    <property type="evidence" value="ECO:0000250"/>
    <property type="project" value="UniProtKB"/>
</dbReference>
<dbReference type="CDD" id="cd00877">
    <property type="entry name" value="Ran"/>
    <property type="match status" value="1"/>
</dbReference>
<dbReference type="FunFam" id="3.40.50.300:FF:000131">
    <property type="entry name" value="GTP-binding nuclear protein Ran"/>
    <property type="match status" value="1"/>
</dbReference>
<dbReference type="Gene3D" id="3.40.50.300">
    <property type="entry name" value="P-loop containing nucleotide triphosphate hydrolases"/>
    <property type="match status" value="1"/>
</dbReference>
<dbReference type="InterPro" id="IPR027417">
    <property type="entry name" value="P-loop_NTPase"/>
</dbReference>
<dbReference type="InterPro" id="IPR002041">
    <property type="entry name" value="Ran_GTPase"/>
</dbReference>
<dbReference type="InterPro" id="IPR005225">
    <property type="entry name" value="Small_GTP-bd"/>
</dbReference>
<dbReference type="InterPro" id="IPR001806">
    <property type="entry name" value="Small_GTPase"/>
</dbReference>
<dbReference type="NCBIfam" id="TIGR00231">
    <property type="entry name" value="small_GTP"/>
    <property type="match status" value="1"/>
</dbReference>
<dbReference type="PANTHER" id="PTHR24071:SF0">
    <property type="entry name" value="GTP-BINDING NUCLEAR PROTEIN RAN"/>
    <property type="match status" value="1"/>
</dbReference>
<dbReference type="PANTHER" id="PTHR24071">
    <property type="entry name" value="RAN GTPASE"/>
    <property type="match status" value="1"/>
</dbReference>
<dbReference type="Pfam" id="PF00071">
    <property type="entry name" value="Ras"/>
    <property type="match status" value="1"/>
</dbReference>
<dbReference type="PRINTS" id="PR00627">
    <property type="entry name" value="GTPRANTC4"/>
</dbReference>
<dbReference type="SMART" id="SM00175">
    <property type="entry name" value="RAB"/>
    <property type="match status" value="1"/>
</dbReference>
<dbReference type="SMART" id="SM00176">
    <property type="entry name" value="RAN"/>
    <property type="match status" value="1"/>
</dbReference>
<dbReference type="SMART" id="SM00173">
    <property type="entry name" value="RAS"/>
    <property type="match status" value="1"/>
</dbReference>
<dbReference type="SMART" id="SM00174">
    <property type="entry name" value="RHO"/>
    <property type="match status" value="1"/>
</dbReference>
<dbReference type="SUPFAM" id="SSF52540">
    <property type="entry name" value="P-loop containing nucleoside triphosphate hydrolases"/>
    <property type="match status" value="1"/>
</dbReference>
<dbReference type="PROSITE" id="PS51418">
    <property type="entry name" value="RAN"/>
    <property type="match status" value="1"/>
</dbReference>
<name>RAN_XENLA</name>
<keyword id="KW-0963">Cytoplasm</keyword>
<keyword id="KW-0217">Developmental protein</keyword>
<keyword id="KW-0903">Direct protein sequencing</keyword>
<keyword id="KW-0342">GTP-binding</keyword>
<keyword id="KW-0378">Hydrolase</keyword>
<keyword id="KW-0460">Magnesium</keyword>
<keyword id="KW-0479">Metal-binding</keyword>
<keyword id="KW-0547">Nucleotide-binding</keyword>
<keyword id="KW-0539">Nucleus</keyword>
<keyword id="KW-0653">Protein transport</keyword>
<keyword id="KW-1185">Reference proteome</keyword>
<keyword id="KW-0813">Transport</keyword>
<sequence>MAAQGEPQVQFKLVLVGDGGTGKTTFVKRHLTGEFEKKYVATLGVEVHPLVFHTNRGPIKFNVWDTAGQEKFGGLRDGYYIQAQCAIIMFDVTSRVTYKNVPNWHRDLVRVCENIPIVLCGNKVDIKDRKVKAKSIVFHRKKNLQYYDISAKSNYNFEKPFLWLARKLIGDPNLEFVAMPALAPPEVVMDPALAAQYEQDLQNAQATALPDEDDDL</sequence>
<accession>P52301</accession>
<accession>Q7ZYT6</accession>
<accession>Q9IBE8</accession>
<feature type="chain" id="PRO_0000208702" description="GTP-binding nuclear protein Ran">
    <location>
        <begin position="1"/>
        <end position="216"/>
    </location>
</feature>
<feature type="domain" description="Small GTPase Ran-type" evidence="4">
    <location>
        <begin position="7"/>
        <end position="171"/>
    </location>
</feature>
<feature type="region of interest" description="Switch-I" evidence="4">
    <location>
        <begin position="37"/>
        <end position="45"/>
    </location>
</feature>
<feature type="region of interest" description="Switch-II" evidence="4">
    <location>
        <begin position="68"/>
        <end position="84"/>
    </location>
</feature>
<feature type="region of interest" description="Interaction with RANBP1" evidence="2">
    <location>
        <begin position="211"/>
        <end position="216"/>
    </location>
</feature>
<feature type="binding site" evidence="1">
    <location>
        <begin position="18"/>
        <end position="25"/>
    </location>
    <ligand>
        <name>GTP</name>
        <dbReference type="ChEBI" id="CHEBI:37565"/>
    </ligand>
</feature>
<feature type="binding site" evidence="1">
    <location>
        <begin position="36"/>
        <end position="42"/>
    </location>
    <ligand>
        <name>GTP</name>
        <dbReference type="ChEBI" id="CHEBI:37565"/>
    </ligand>
</feature>
<feature type="binding site" evidence="1">
    <location>
        <position position="68"/>
    </location>
    <ligand>
        <name>GTP</name>
        <dbReference type="ChEBI" id="CHEBI:37565"/>
    </ligand>
</feature>
<feature type="binding site" evidence="1">
    <location>
        <begin position="122"/>
        <end position="125"/>
    </location>
    <ligand>
        <name>GTP</name>
        <dbReference type="ChEBI" id="CHEBI:37565"/>
    </ligand>
</feature>
<feature type="binding site" evidence="1">
    <location>
        <begin position="150"/>
        <end position="152"/>
    </location>
    <ligand>
        <name>GTP</name>
        <dbReference type="ChEBI" id="CHEBI:37565"/>
    </ligand>
</feature>
<feature type="site" description="Essential for GTP hydrolysis" evidence="2">
    <location>
        <position position="69"/>
    </location>
</feature>
<feature type="sequence conflict" description="In Ref. 2; AAH41293." evidence="10" ref="2">
    <original>Q</original>
    <variation>A</variation>
    <location>
        <position position="199"/>
    </location>
</feature>
<comment type="function">
    <text evidence="2 5 7 11">GTPase involved in nucleocytoplasmic transport, participating both to the import and the export from the nucleus of proteins and RNAs (PubMed:8413630). Switches between a cytoplasmic GDP- and a nuclear GTP-bound state by nucleotide exchange and GTP hydrolysis. Nuclear import receptors such as importin beta bind their substrates only in the absence of GTP-bound RAN and release them upon direct interaction with GTP-bound RAN, while export receptors behave in the opposite way. Thereby, RAN controls cargo loading and release by transport receptors in the proper compartment and ensures the directionality of the transport. Interaction with RANBP1 induces a conformation change in the complex formed by XPO1 and RAN that triggers the release of the nuclear export signal of cargo proteins (By similarity). RAN (GTP-bound form) triggers microtubule assembly at mitotic chromosomes and is required for normal mitotic spindle assembly and chromosome segregation (PubMed:10408446). Required for normal progress through mitosis (By similarity). In concert with nemp1a/b, required for proper eye development (PubMed:25946333).</text>
</comment>
<comment type="catalytic activity">
    <reaction evidence="2">
        <text>GTP + H2O = GDP + phosphate + H(+)</text>
        <dbReference type="Rhea" id="RHEA:19669"/>
        <dbReference type="ChEBI" id="CHEBI:15377"/>
        <dbReference type="ChEBI" id="CHEBI:15378"/>
        <dbReference type="ChEBI" id="CHEBI:37565"/>
        <dbReference type="ChEBI" id="CHEBI:43474"/>
        <dbReference type="ChEBI" id="CHEBI:58189"/>
    </reaction>
    <physiologicalReaction direction="left-to-right" evidence="2">
        <dbReference type="Rhea" id="RHEA:19670"/>
    </physiologicalReaction>
</comment>
<comment type="cofactor">
    <cofactor evidence="2">
        <name>Mg(2+)</name>
        <dbReference type="ChEBI" id="CHEBI:18420"/>
    </cofactor>
    <text evidence="2">Mg(2+) interacts primarily with the phosphate groups of the bound guanine nucleotide.</text>
</comment>
<comment type="subunit">
    <text evidence="1 2 3 7">Monomer. Interacts with rangap1, which promotes ran-mediated GTP hydrolysis. Interacts with kpnb1. Interaction with kpnb1 inhibits rangap1-mediated stimulation of GTPase activity. Interacts with rcc1 which promotes the exchange of ran-bound GDP by GTP. Interaction with kpnb1 inhibits rcc1-mediated exchange of ran-bound GDP by GTP. Interacts (GTP-bound form) with tnpo1; the interaction is direct. Interacts (GTP-bound form) with tnpo3; the interaction is direct. Interacts with kpnb1 and with tnpo1; both inhibit ran GTPase activity. Interacts (via C-terminus) with ranbp1, which alleviates the inhibition of ran GTPase activity. Interacts with rangrf, which promotes the release of bound guanine nucleotide. Rangrf and rcc1 compete for an overlapping binding site on ran. Identified in a complex with kpna2 and cse1l; interaction with ranbp1 mediates dissociation of ran from this complex. Interaction with both ranbp1 and kpna2 promotes dissociation of the complex between ran and kpnb1. Identified in a complex composed of ran, rangap1 and ranbp1. Identified in a complex that contains tnpo1, ran and ranbp1. Identified in a nuclear export complex with xpo1. Interaction with ranbp1 or ranbp2 induces a conformation change in the complex formed by xpo1 and ran that triggers the release of the nuclear export signal of cargo proteins. Component of a nuclear export receptor complex composed of kpnb1, ran, snupn and xpo1 (By similarity). Interacts with nemp1a and nemp1b (PubMed:25946333).</text>
</comment>
<comment type="subcellular location">
    <subcellularLocation>
        <location evidence="2">Nucleus</location>
    </subcellularLocation>
    <subcellularLocation>
        <location evidence="2">Nucleus envelope</location>
    </subcellularLocation>
    <subcellularLocation>
        <location evidence="8">Cytoplasm</location>
        <location evidence="8">Cytosol</location>
    </subcellularLocation>
    <subcellularLocation>
        <location evidence="2">Cytoplasm</location>
    </subcellularLocation>
    <text evidence="2">Predominantly nuclear during interphase. Becomes dispersed throughout the cytoplasm during mitosis (By similarity).</text>
</comment>
<comment type="developmental stage">
    <text evidence="6 7">Detected throughout embryonic development (PubMed:11180838). Detected within the animal pole region at the four-cell stage, then in the anterior neural plate at the neurula stage, and within the head region including the otic vesicles, branchial arches, and the tail region at the tailbud stage (PubMed:11180838, PubMed:25946333).</text>
</comment>
<comment type="disruption phenotype">
    <text evidence="7">Morpholino knockdown results in defects in eye development and reduction of cell density at the neurula stage. Co-knockdown of nemp1a/b and ran elicits reduction of cell density and eye defects more significantly than the individual knockdown of either one.</text>
</comment>
<comment type="similarity">
    <text evidence="4 10">Belongs to the small GTPase superfamily. Ran family.</text>
</comment>
<proteinExistence type="evidence at protein level"/>
<protein>
    <recommendedName>
        <fullName>GTP-binding nuclear protein Ran</fullName>
        <ecNumber evidence="2">3.6.5.-</ecNumber>
    </recommendedName>
    <alternativeName>
        <fullName>GTPase Ran</fullName>
    </alternativeName>
    <alternativeName>
        <fullName evidence="9">Ras-like protein TC4</fullName>
    </alternativeName>
    <alternativeName>
        <fullName>Ras-related nuclear protein</fullName>
    </alternativeName>
</protein>
<evidence type="ECO:0000250" key="1">
    <source>
        <dbReference type="UniProtKB" id="P62825"/>
    </source>
</evidence>
<evidence type="ECO:0000250" key="2">
    <source>
        <dbReference type="UniProtKB" id="P62826"/>
    </source>
</evidence>
<evidence type="ECO:0000250" key="3">
    <source>
        <dbReference type="UniProtKB" id="P62827"/>
    </source>
</evidence>
<evidence type="ECO:0000255" key="4">
    <source>
        <dbReference type="PROSITE-ProRule" id="PRU00752"/>
    </source>
</evidence>
<evidence type="ECO:0000269" key="5">
    <source>
    </source>
</evidence>
<evidence type="ECO:0000269" key="6">
    <source>
    </source>
</evidence>
<evidence type="ECO:0000269" key="7">
    <source>
    </source>
</evidence>
<evidence type="ECO:0000269" key="8">
    <source>
    </source>
</evidence>
<evidence type="ECO:0000303" key="9">
    <source>
    </source>
</evidence>
<evidence type="ECO:0000305" key="10"/>
<evidence type="ECO:0000305" key="11">
    <source>
    </source>
</evidence>
<reference key="1">
    <citation type="journal article" date="2000" name="Dev. Genes Evol.">
        <title>Expression of the Xenopus GTP-binding protein gene Ran during embryogenesis.</title>
        <authorList>
            <person name="Onuma Y."/>
            <person name="Nishihara R."/>
            <person name="Takahashi S."/>
            <person name="Tanegashima K."/>
            <person name="Fukui A."/>
            <person name="Asashima M."/>
        </authorList>
    </citation>
    <scope>NUCLEOTIDE SEQUENCE [MRNA]</scope>
    <scope>DEVELOPMENTAL STAGE</scope>
</reference>
<reference key="2">
    <citation type="submission" date="2002-12" db="EMBL/GenBank/DDBJ databases">
        <authorList>
            <consortium name="NIH - Xenopus Gene Collection (XGC) project"/>
        </authorList>
    </citation>
    <scope>NUCLEOTIDE SEQUENCE [LARGE SCALE MRNA]</scope>
    <source>
        <tissue>Embryo</tissue>
    </source>
</reference>
<reference key="3">
    <citation type="journal article" date="1993" name="Nature">
        <title>The GTP-binding protein Ran/TC4 is required for protein import into the nucleus.</title>
        <authorList>
            <person name="Moore M.S."/>
            <person name="Blobel G."/>
        </authorList>
    </citation>
    <scope>PROTEIN SEQUENCE OF 40-52 AND 62-71</scope>
    <scope>FUNCTION</scope>
    <scope>SUBCELLULAR LOCATION</scope>
    <source>
        <tissue>Ovary</tissue>
    </source>
</reference>
<reference key="4">
    <citation type="journal article" date="1999" name="Nature">
        <title>Generation of GTP-bound Ran by RCC1 is required for chromatin-induced mitotic spindle formation.</title>
        <authorList>
            <person name="Carazo-Salas R.E."/>
            <person name="Guarguaglini G."/>
            <person name="Gruss O.J."/>
            <person name="Segref A."/>
            <person name="Karsenti E."/>
            <person name="Mattaj I.W."/>
        </authorList>
    </citation>
    <scope>FUNCTION</scope>
</reference>
<reference key="5">
    <citation type="journal article" date="2015" name="PLoS ONE">
        <title>The inner nuclear membrane protein Nemp1 is a new type of RanGTP-binding protein in eukaryotes.</title>
        <authorList>
            <person name="Shibano T."/>
            <person name="Mamada H."/>
            <person name="Hakuno F."/>
            <person name="Takahashi S."/>
            <person name="Taira M."/>
        </authorList>
    </citation>
    <scope>FUNCTION</scope>
    <scope>DISRUPTION PHENOTYPE</scope>
    <scope>DEVELOPMENTAL STAGE</scope>
    <scope>INTERACTION WITH NEMP1A AND NEMP1B</scope>
</reference>